<reference key="1">
    <citation type="journal article" date="2006" name="BMC Evol. Biol.">
        <title>The complete chloroplast genome sequence of the chlorophycean green alga Scenedesmus obliquus reveals a compact gene organization and a biased distribution of genes on the two DNA strands.</title>
        <authorList>
            <person name="de Cambiaire J.-C."/>
            <person name="Otis C."/>
            <person name="Lemieux C."/>
            <person name="Turmel M."/>
        </authorList>
    </citation>
    <scope>NUCLEOTIDE SEQUENCE [LARGE SCALE GENOMIC DNA]</scope>
    <source>
        <strain>UTEX 393</strain>
    </source>
</reference>
<proteinExistence type="inferred from homology"/>
<keyword id="KW-0004">4Fe-4S</keyword>
<keyword id="KW-0067">ATP-binding</keyword>
<keyword id="KW-0149">Chlorophyll biosynthesis</keyword>
<keyword id="KW-0150">Chloroplast</keyword>
<keyword id="KW-0408">Iron</keyword>
<keyword id="KW-0411">Iron-sulfur</keyword>
<keyword id="KW-0479">Metal-binding</keyword>
<keyword id="KW-0547">Nucleotide-binding</keyword>
<keyword id="KW-0560">Oxidoreductase</keyword>
<keyword id="KW-0602">Photosynthesis</keyword>
<keyword id="KW-0934">Plastid</keyword>
<feature type="chain" id="PRO_0000275260" description="Light-independent protochlorophyllide reductase subunit B">
    <location>
        <begin position="1"/>
        <end position="532"/>
    </location>
</feature>
<feature type="active site" description="Proton donor" evidence="1">
    <location>
        <position position="318"/>
    </location>
</feature>
<feature type="binding site" evidence="1">
    <location>
        <position position="36"/>
    </location>
    <ligand>
        <name>[4Fe-4S] cluster</name>
        <dbReference type="ChEBI" id="CHEBI:49883"/>
        <note>ligand shared with heterodimeric partner</note>
    </ligand>
</feature>
<feature type="binding site" evidence="1">
    <location>
        <begin position="453"/>
        <end position="454"/>
    </location>
    <ligand>
        <name>substrate</name>
    </ligand>
</feature>
<geneLocation type="chloroplast"/>
<organism>
    <name type="scientific">Tetradesmus obliquus</name>
    <name type="common">Green alga</name>
    <name type="synonym">Acutodesmus obliquus</name>
    <dbReference type="NCBI Taxonomy" id="3088"/>
    <lineage>
        <taxon>Eukaryota</taxon>
        <taxon>Viridiplantae</taxon>
        <taxon>Chlorophyta</taxon>
        <taxon>core chlorophytes</taxon>
        <taxon>Chlorophyceae</taxon>
        <taxon>CS clade</taxon>
        <taxon>Sphaeropleales</taxon>
        <taxon>Scenedesmaceae</taxon>
        <taxon>Tetradesmus</taxon>
    </lineage>
</organism>
<dbReference type="EC" id="1.3.7.7" evidence="1"/>
<dbReference type="EMBL" id="DQ396875">
    <property type="protein sequence ID" value="ABD48245.1"/>
    <property type="molecule type" value="Genomic_DNA"/>
</dbReference>
<dbReference type="RefSeq" id="YP_635962.1">
    <property type="nucleotide sequence ID" value="NC_008101.1"/>
</dbReference>
<dbReference type="SMR" id="Q1KVW2"/>
<dbReference type="GeneID" id="4099744"/>
<dbReference type="UniPathway" id="UPA00670"/>
<dbReference type="GO" id="GO:0009507">
    <property type="term" value="C:chloroplast"/>
    <property type="evidence" value="ECO:0007669"/>
    <property type="project" value="UniProtKB-SubCell"/>
</dbReference>
<dbReference type="GO" id="GO:0051539">
    <property type="term" value="F:4 iron, 4 sulfur cluster binding"/>
    <property type="evidence" value="ECO:0007669"/>
    <property type="project" value="UniProtKB-UniRule"/>
</dbReference>
<dbReference type="GO" id="GO:0005524">
    <property type="term" value="F:ATP binding"/>
    <property type="evidence" value="ECO:0007669"/>
    <property type="project" value="UniProtKB-UniRule"/>
</dbReference>
<dbReference type="GO" id="GO:0046872">
    <property type="term" value="F:metal ion binding"/>
    <property type="evidence" value="ECO:0007669"/>
    <property type="project" value="UniProtKB-KW"/>
</dbReference>
<dbReference type="GO" id="GO:0016730">
    <property type="term" value="F:oxidoreductase activity, acting on iron-sulfur proteins as donors"/>
    <property type="evidence" value="ECO:0007669"/>
    <property type="project" value="InterPro"/>
</dbReference>
<dbReference type="GO" id="GO:0016636">
    <property type="term" value="F:oxidoreductase activity, acting on the CH-CH group of donors, iron-sulfur protein as acceptor"/>
    <property type="evidence" value="ECO:0007669"/>
    <property type="project" value="UniProtKB-UniRule"/>
</dbReference>
<dbReference type="GO" id="GO:0036068">
    <property type="term" value="P:light-independent chlorophyll biosynthetic process"/>
    <property type="evidence" value="ECO:0007669"/>
    <property type="project" value="UniProtKB-UniRule"/>
</dbReference>
<dbReference type="GO" id="GO:0019685">
    <property type="term" value="P:photosynthesis, dark reaction"/>
    <property type="evidence" value="ECO:0007669"/>
    <property type="project" value="InterPro"/>
</dbReference>
<dbReference type="CDD" id="cd01981">
    <property type="entry name" value="Pchlide_reductase_B"/>
    <property type="match status" value="1"/>
</dbReference>
<dbReference type="Gene3D" id="1.20.89.20">
    <property type="match status" value="1"/>
</dbReference>
<dbReference type="Gene3D" id="3.40.50.1980">
    <property type="entry name" value="Nitrogenase molybdenum iron protein domain"/>
    <property type="match status" value="3"/>
</dbReference>
<dbReference type="Gene3D" id="1.10.8.550">
    <property type="entry name" value="Proto-chlorophyllide reductase 57 kD subunit B"/>
    <property type="match status" value="1"/>
</dbReference>
<dbReference type="HAMAP" id="MF_00353">
    <property type="entry name" value="ChlB_BchB"/>
    <property type="match status" value="1"/>
</dbReference>
<dbReference type="InterPro" id="IPR050152">
    <property type="entry name" value="ChlB/BchB/BchZ"/>
</dbReference>
<dbReference type="InterPro" id="IPR013580">
    <property type="entry name" value="LI-POR_suB-like_C"/>
</dbReference>
<dbReference type="InterPro" id="IPR000510">
    <property type="entry name" value="Nase/OxRdtase_comp1"/>
</dbReference>
<dbReference type="InterPro" id="IPR042298">
    <property type="entry name" value="P-CP_red_C"/>
</dbReference>
<dbReference type="InterPro" id="IPR005969">
    <property type="entry name" value="Protochl_reductB"/>
</dbReference>
<dbReference type="InterPro" id="IPR016209">
    <property type="entry name" value="Protochlorophyllide_Rdtase"/>
</dbReference>
<dbReference type="NCBIfam" id="TIGR01278">
    <property type="entry name" value="DPOR_BchB"/>
    <property type="match status" value="1"/>
</dbReference>
<dbReference type="PANTHER" id="PTHR33712">
    <property type="entry name" value="LIGHT-INDEPENDENT PROTOCHLOROPHYLLIDE REDUCTASE SUBUNIT B"/>
    <property type="match status" value="1"/>
</dbReference>
<dbReference type="PANTHER" id="PTHR33712:SF7">
    <property type="entry name" value="LIGHT-INDEPENDENT PROTOCHLOROPHYLLIDE REDUCTASE SUBUNIT B"/>
    <property type="match status" value="1"/>
</dbReference>
<dbReference type="Pfam" id="PF00148">
    <property type="entry name" value="Oxidored_nitro"/>
    <property type="match status" value="1"/>
</dbReference>
<dbReference type="Pfam" id="PF08369">
    <property type="entry name" value="PCP_red"/>
    <property type="match status" value="1"/>
</dbReference>
<dbReference type="PIRSF" id="PIRSF000163">
    <property type="entry name" value="PCP_ChlB"/>
    <property type="match status" value="1"/>
</dbReference>
<dbReference type="SUPFAM" id="SSF53807">
    <property type="entry name" value="Helical backbone' metal receptor"/>
    <property type="match status" value="1"/>
</dbReference>
<gene>
    <name evidence="1" type="primary">chlB</name>
</gene>
<accession>Q1KVW2</accession>
<comment type="function">
    <text evidence="1">Component of the dark-operative protochlorophyllide reductase (DPOR) that uses Mg-ATP and reduced ferredoxin to reduce ring D of protochlorophyllide (Pchlide) to form chlorophyllide a (Chlide). This reaction is light-independent. The NB-protein (ChlN-ChlB) is the catalytic component of the complex.</text>
</comment>
<comment type="catalytic activity">
    <reaction evidence="1">
        <text>chlorophyllide a + oxidized 2[4Fe-4S]-[ferredoxin] + 2 ADP + 2 phosphate = protochlorophyllide a + reduced 2[4Fe-4S]-[ferredoxin] + 2 ATP + 2 H2O</text>
        <dbReference type="Rhea" id="RHEA:28202"/>
        <dbReference type="Rhea" id="RHEA-COMP:10002"/>
        <dbReference type="Rhea" id="RHEA-COMP:10004"/>
        <dbReference type="ChEBI" id="CHEBI:15377"/>
        <dbReference type="ChEBI" id="CHEBI:30616"/>
        <dbReference type="ChEBI" id="CHEBI:33722"/>
        <dbReference type="ChEBI" id="CHEBI:33723"/>
        <dbReference type="ChEBI" id="CHEBI:43474"/>
        <dbReference type="ChEBI" id="CHEBI:83348"/>
        <dbReference type="ChEBI" id="CHEBI:83350"/>
        <dbReference type="ChEBI" id="CHEBI:456216"/>
        <dbReference type="EC" id="1.3.7.7"/>
    </reaction>
</comment>
<comment type="cofactor">
    <cofactor evidence="1">
        <name>[4Fe-4S] cluster</name>
        <dbReference type="ChEBI" id="CHEBI:49883"/>
    </cofactor>
    <text evidence="1">Binds 1 [4Fe-4S] cluster per heterodimer. The cluster is bound at the heterodimer interface by residues from both subunits.</text>
</comment>
<comment type="pathway">
    <text evidence="1">Porphyrin-containing compound metabolism; chlorophyll biosynthesis (light-independent).</text>
</comment>
<comment type="subunit">
    <text evidence="1">Protochlorophyllide reductase is composed of three subunits; ChlL, ChlN and ChlB. Forms a heterotetramer of two ChlB and two ChlN subunits.</text>
</comment>
<comment type="subcellular location">
    <subcellularLocation>
        <location>Plastid</location>
        <location>Chloroplast</location>
    </subcellularLocation>
</comment>
<comment type="similarity">
    <text evidence="1">Belongs to the ChlB/BchB/BchZ family.</text>
</comment>
<name>CHLB_TETOB</name>
<sequence>MKLAYWMYAGPAHLGTLRVASSFKNVHAIMHAPLGDDYFNVMRSMLERERDFTPVTASIVDRHVLARGSQEKVVDNITRKEKEERPDLIVLTPTCTSSILQEDLQNFVNRALTLKDSHADVLLADVNHYRVNEFQAADRTLEQIVRFYIEKAKRENFDFSKNQKISANILGVFTLGFHNMHDCRELKRLLTDLGIEINEIIPEGGNVTNLRNLPKAHFNIVPYREVGLMTAMYLKNEFQMPYISTTPMGILNTAQFIREIETLLKALTQNLSNSSNCEKFNISFAEEAAKILEKDFQKYISEQSRFVSQAAWFSRSIDCQNLTGKRAVVFGDATHAASMTKILSCEMGIRVVCSGTYCKHDADWFREQVRGFCDEILITEDHSQVGDMISRLEPAAIFGTQMERHVGKRLDIPCGVISAPVHIQNFPLGYRPFLGYEGTNQIADLVYNSFTLGMEDHLLEIFNGHDTKQILPKIQFEDGSLEWSKDALEELSRIPGFVRGKVKRNVEKFAQQNNKPFITLELMFAAKEAVNA</sequence>
<protein>
    <recommendedName>
        <fullName evidence="1">Light-independent protochlorophyllide reductase subunit B</fullName>
        <shortName evidence="1">DPOR subunit B</shortName>
        <shortName evidence="1">LI-POR subunit B</shortName>
        <ecNumber evidence="1">1.3.7.7</ecNumber>
    </recommendedName>
</protein>
<evidence type="ECO:0000255" key="1">
    <source>
        <dbReference type="HAMAP-Rule" id="MF_00353"/>
    </source>
</evidence>